<feature type="chain" id="PRO_0000105479" description="DNA polymerase III subunit epsilon">
    <location>
        <begin position="1"/>
        <end position="202"/>
    </location>
</feature>
<feature type="active site" description="Proton acceptor" evidence="1">
    <location>
        <position position="162"/>
    </location>
</feature>
<feature type="binding site" evidence="1">
    <location>
        <position position="23"/>
    </location>
    <ligand>
        <name>a divalent metal cation</name>
        <dbReference type="ChEBI" id="CHEBI:60240"/>
        <label>1</label>
        <note>catalytic</note>
    </ligand>
</feature>
<feature type="binding site" evidence="1">
    <location>
        <position position="23"/>
    </location>
    <ligand>
        <name>a divalent metal cation</name>
        <dbReference type="ChEBI" id="CHEBI:60240"/>
        <label>2</label>
        <note>catalytic</note>
    </ligand>
</feature>
<feature type="binding site" evidence="1">
    <location>
        <position position="23"/>
    </location>
    <ligand>
        <name>substrate</name>
    </ligand>
</feature>
<feature type="binding site" evidence="1">
    <location>
        <position position="25"/>
    </location>
    <ligand>
        <name>a divalent metal cation</name>
        <dbReference type="ChEBI" id="CHEBI:60240"/>
        <label>1</label>
        <note>catalytic</note>
    </ligand>
</feature>
<feature type="binding site" evidence="1">
    <location>
        <position position="25"/>
    </location>
    <ligand>
        <name>substrate</name>
    </ligand>
</feature>
<feature type="binding site" evidence="1">
    <location>
        <position position="167"/>
    </location>
    <ligand>
        <name>a divalent metal cation</name>
        <dbReference type="ChEBI" id="CHEBI:60240"/>
        <label>1</label>
        <note>catalytic</note>
    </ligand>
</feature>
<feature type="binding site" evidence="1">
    <location>
        <position position="167"/>
    </location>
    <ligand>
        <name>substrate</name>
    </ligand>
</feature>
<protein>
    <recommendedName>
        <fullName>DNA polymerase III subunit epsilon</fullName>
        <ecNumber>2.7.7.7</ecNumber>
    </recommendedName>
</protein>
<name>DPO3E_AQUAE</name>
<sequence length="202" mass="23045">MKSSPKSLKMRDNLLDGTFVVIDLEATGFDVEKSEVIDLAAVRVEGGIITEKFSTLVYPGYFIPERIKKLTGITNAMLVGQPTIEEVLPEFLEFVGDNIVVGHFVEQDIKFINKYTKQYRGKKFRNPSLCTLKLARKVFPGLKKYSLKEIAENFGFETNGVHRALKDATLTAEIFIKILEELWFKYGIGDYYSLKRLEKGKF</sequence>
<keyword id="KW-0235">DNA replication</keyword>
<keyword id="KW-0239">DNA-directed DNA polymerase</keyword>
<keyword id="KW-0269">Exonuclease</keyword>
<keyword id="KW-0378">Hydrolase</keyword>
<keyword id="KW-0460">Magnesium</keyword>
<keyword id="KW-0464">Manganese</keyword>
<keyword id="KW-0479">Metal-binding</keyword>
<keyword id="KW-0540">Nuclease</keyword>
<keyword id="KW-0548">Nucleotidyltransferase</keyword>
<keyword id="KW-1185">Reference proteome</keyword>
<keyword id="KW-0808">Transferase</keyword>
<reference key="1">
    <citation type="journal article" date="1998" name="Nature">
        <title>The complete genome of the hyperthermophilic bacterium Aquifex aeolicus.</title>
        <authorList>
            <person name="Deckert G."/>
            <person name="Warren P.V."/>
            <person name="Gaasterland T."/>
            <person name="Young W.G."/>
            <person name="Lenox A.L."/>
            <person name="Graham D.E."/>
            <person name="Overbeek R."/>
            <person name="Snead M.A."/>
            <person name="Keller M."/>
            <person name="Aujay M."/>
            <person name="Huber R."/>
            <person name="Feldman R.A."/>
            <person name="Short J.M."/>
            <person name="Olsen G.J."/>
            <person name="Swanson R.V."/>
        </authorList>
    </citation>
    <scope>NUCLEOTIDE SEQUENCE [LARGE SCALE GENOMIC DNA]</scope>
    <source>
        <strain>VF5</strain>
    </source>
</reference>
<proteinExistence type="inferred from homology"/>
<comment type="function">
    <text evidence="1">DNA polymerase III is a complex, multichain enzyme responsible for most of the replicative synthesis in bacteria. The epsilon subunit contain the editing function and is a proofreading 3'-5' exonuclease (By similarity).</text>
</comment>
<comment type="catalytic activity">
    <reaction>
        <text>DNA(n) + a 2'-deoxyribonucleoside 5'-triphosphate = DNA(n+1) + diphosphate</text>
        <dbReference type="Rhea" id="RHEA:22508"/>
        <dbReference type="Rhea" id="RHEA-COMP:17339"/>
        <dbReference type="Rhea" id="RHEA-COMP:17340"/>
        <dbReference type="ChEBI" id="CHEBI:33019"/>
        <dbReference type="ChEBI" id="CHEBI:61560"/>
        <dbReference type="ChEBI" id="CHEBI:173112"/>
        <dbReference type="EC" id="2.7.7.7"/>
    </reaction>
</comment>
<comment type="cofactor">
    <cofactor evidence="1">
        <name>Mg(2+)</name>
        <dbReference type="ChEBI" id="CHEBI:18420"/>
    </cofactor>
    <cofactor evidence="1">
        <name>Mn(2+)</name>
        <dbReference type="ChEBI" id="CHEBI:29035"/>
    </cofactor>
    <text evidence="1">Binds 2 divalent metal cations. Magnesium or manganese.</text>
</comment>
<comment type="subunit">
    <text evidence="1">DNA polymerase III contains a core (composed of alpha, epsilon and theta chains) that associates with a tau subunit. This core dimerizes to form the POLIII' complex. PolIII' associates with the gamma complex (composed of gamma, delta, delta', psi and chi chains) and with the beta chain to form the complete DNA polymerase III complex (By similarity).</text>
</comment>
<gene>
    <name type="primary">dnaQ</name>
    <name type="ordered locus">aq_932</name>
</gene>
<dbReference type="EC" id="2.7.7.7"/>
<dbReference type="EMBL" id="AE000657">
    <property type="protein sequence ID" value="AAC07031.1"/>
    <property type="molecule type" value="Genomic_DNA"/>
</dbReference>
<dbReference type="PIR" id="G70380">
    <property type="entry name" value="G70380"/>
</dbReference>
<dbReference type="RefSeq" id="NP_213636.1">
    <property type="nucleotide sequence ID" value="NC_000918.1"/>
</dbReference>
<dbReference type="SMR" id="O67074"/>
<dbReference type="FunCoup" id="O67074">
    <property type="interactions" value="70"/>
</dbReference>
<dbReference type="STRING" id="224324.aq_932"/>
<dbReference type="EnsemblBacteria" id="AAC07031">
    <property type="protein sequence ID" value="AAC07031"/>
    <property type="gene ID" value="aq_932"/>
</dbReference>
<dbReference type="KEGG" id="aae:aq_932"/>
<dbReference type="eggNOG" id="COG0847">
    <property type="taxonomic scope" value="Bacteria"/>
</dbReference>
<dbReference type="HOGENOM" id="CLU_047806_7_1_0"/>
<dbReference type="InParanoid" id="O67074"/>
<dbReference type="OrthoDB" id="9803913at2"/>
<dbReference type="Proteomes" id="UP000000798">
    <property type="component" value="Chromosome"/>
</dbReference>
<dbReference type="GO" id="GO:0005829">
    <property type="term" value="C:cytosol"/>
    <property type="evidence" value="ECO:0000318"/>
    <property type="project" value="GO_Central"/>
</dbReference>
<dbReference type="GO" id="GO:0008408">
    <property type="term" value="F:3'-5' exonuclease activity"/>
    <property type="evidence" value="ECO:0000318"/>
    <property type="project" value="GO_Central"/>
</dbReference>
<dbReference type="GO" id="GO:0003677">
    <property type="term" value="F:DNA binding"/>
    <property type="evidence" value="ECO:0007669"/>
    <property type="project" value="InterPro"/>
</dbReference>
<dbReference type="GO" id="GO:0003887">
    <property type="term" value="F:DNA-directed DNA polymerase activity"/>
    <property type="evidence" value="ECO:0007669"/>
    <property type="project" value="UniProtKB-KW"/>
</dbReference>
<dbReference type="GO" id="GO:0046872">
    <property type="term" value="F:metal ion binding"/>
    <property type="evidence" value="ECO:0007669"/>
    <property type="project" value="UniProtKB-KW"/>
</dbReference>
<dbReference type="GO" id="GO:0045004">
    <property type="term" value="P:DNA replication proofreading"/>
    <property type="evidence" value="ECO:0000318"/>
    <property type="project" value="GO_Central"/>
</dbReference>
<dbReference type="CDD" id="cd06127">
    <property type="entry name" value="DEDDh"/>
    <property type="match status" value="1"/>
</dbReference>
<dbReference type="FunFam" id="3.30.420.10:FF:000045">
    <property type="entry name" value="3'-5' exonuclease DinG"/>
    <property type="match status" value="1"/>
</dbReference>
<dbReference type="Gene3D" id="1.20.5.140">
    <property type="match status" value="1"/>
</dbReference>
<dbReference type="Gene3D" id="3.30.420.10">
    <property type="entry name" value="Ribonuclease H-like superfamily/Ribonuclease H"/>
    <property type="match status" value="1"/>
</dbReference>
<dbReference type="InterPro" id="IPR006054">
    <property type="entry name" value="DnaQ"/>
</dbReference>
<dbReference type="InterPro" id="IPR013520">
    <property type="entry name" value="Exonuclease_RNaseT/DNA_pol3"/>
</dbReference>
<dbReference type="InterPro" id="IPR012337">
    <property type="entry name" value="RNaseH-like_sf"/>
</dbReference>
<dbReference type="InterPro" id="IPR036397">
    <property type="entry name" value="RNaseH_sf"/>
</dbReference>
<dbReference type="NCBIfam" id="TIGR00573">
    <property type="entry name" value="dnaq"/>
    <property type="match status" value="1"/>
</dbReference>
<dbReference type="PANTHER" id="PTHR30231">
    <property type="entry name" value="DNA POLYMERASE III SUBUNIT EPSILON"/>
    <property type="match status" value="1"/>
</dbReference>
<dbReference type="PANTHER" id="PTHR30231:SF41">
    <property type="entry name" value="DNA POLYMERASE III SUBUNIT EPSILON"/>
    <property type="match status" value="1"/>
</dbReference>
<dbReference type="Pfam" id="PF00929">
    <property type="entry name" value="RNase_T"/>
    <property type="match status" value="1"/>
</dbReference>
<dbReference type="SMART" id="SM00479">
    <property type="entry name" value="EXOIII"/>
    <property type="match status" value="1"/>
</dbReference>
<dbReference type="SUPFAM" id="SSF53098">
    <property type="entry name" value="Ribonuclease H-like"/>
    <property type="match status" value="1"/>
</dbReference>
<accession>O67074</accession>
<evidence type="ECO:0000250" key="1"/>
<organism>
    <name type="scientific">Aquifex aeolicus (strain VF5)</name>
    <dbReference type="NCBI Taxonomy" id="224324"/>
    <lineage>
        <taxon>Bacteria</taxon>
        <taxon>Pseudomonadati</taxon>
        <taxon>Aquificota</taxon>
        <taxon>Aquificia</taxon>
        <taxon>Aquificales</taxon>
        <taxon>Aquificaceae</taxon>
        <taxon>Aquifex</taxon>
    </lineage>
</organism>